<organism>
    <name type="scientific">Fervidobacterium pennivorans (strain DSM 9078 / Ven5)</name>
    <dbReference type="NCBI Taxonomy" id="771875"/>
    <lineage>
        <taxon>Bacteria</taxon>
        <taxon>Thermotogati</taxon>
        <taxon>Thermotogota</taxon>
        <taxon>Thermotogae</taxon>
        <taxon>Thermotogales</taxon>
        <taxon>Fervidobacteriaceae</taxon>
        <taxon>Fervidobacterium</taxon>
    </lineage>
</organism>
<protein>
    <recommendedName>
        <fullName evidence="1">Isoleucine--tRNA ligase</fullName>
        <ecNumber evidence="1">6.1.1.5</ecNumber>
    </recommendedName>
    <alternativeName>
        <fullName evidence="1">Isoleucyl-tRNA synthetase</fullName>
        <shortName evidence="1">IleRS</shortName>
    </alternativeName>
</protein>
<name>SYI_FERPD</name>
<reference key="1">
    <citation type="journal article" date="1999" name="Appl. Environ. Microbiol.">
        <title>Pullulanase type I from fervidobacterium pennavorans ven5: cloning, sequencing, and expression of the gene and biochemical characterization of the recombinant enzyme.</title>
        <authorList>
            <person name="Bertoldo C."/>
            <person name="Duffner F."/>
            <person name="Jorgensen P.L."/>
            <person name="Antranikian G."/>
        </authorList>
    </citation>
    <scope>NUCLEOTIDE SEQUENCE [GENOMIC DNA]</scope>
    <source>
        <strain>DSM 9078 / Ven5</strain>
    </source>
</reference>
<reference key="2">
    <citation type="submission" date="2012-03" db="EMBL/GenBank/DDBJ databases">
        <title>Complete sequence of Fervidobacterium pennivorans DSM 9078.</title>
        <authorList>
            <person name="Lucas S."/>
            <person name="Han J."/>
            <person name="Lapidus A."/>
            <person name="Cheng J.-F."/>
            <person name="Goodwin L."/>
            <person name="Pitluck S."/>
            <person name="Peters L."/>
            <person name="Ovchinnikova G."/>
            <person name="Lu M."/>
            <person name="Detter J.C."/>
            <person name="Han C."/>
            <person name="Tapia R."/>
            <person name="Land M."/>
            <person name="Hauser L."/>
            <person name="Kyrpides N."/>
            <person name="Ivanova N."/>
            <person name="Pagani I."/>
            <person name="Noll K.M."/>
            <person name="Woyke T."/>
        </authorList>
    </citation>
    <scope>NUCLEOTIDE SEQUENCE [LARGE SCALE GENOMIC DNA]</scope>
    <source>
        <strain>DSM 9078 / Ven5</strain>
    </source>
</reference>
<comment type="function">
    <text evidence="1">Catalyzes the attachment of isoleucine to tRNA(Ile). As IleRS can inadvertently accommodate and process structurally similar amino acids such as valine, to avoid such errors it has two additional distinct tRNA(Ile)-dependent editing activities. One activity is designated as 'pretransfer' editing and involves the hydrolysis of activated Val-AMP. The other activity is designated 'posttransfer' editing and involves deacylation of mischarged Val-tRNA(Ile).</text>
</comment>
<comment type="catalytic activity">
    <reaction evidence="1">
        <text>tRNA(Ile) + L-isoleucine + ATP = L-isoleucyl-tRNA(Ile) + AMP + diphosphate</text>
        <dbReference type="Rhea" id="RHEA:11060"/>
        <dbReference type="Rhea" id="RHEA-COMP:9666"/>
        <dbReference type="Rhea" id="RHEA-COMP:9695"/>
        <dbReference type="ChEBI" id="CHEBI:30616"/>
        <dbReference type="ChEBI" id="CHEBI:33019"/>
        <dbReference type="ChEBI" id="CHEBI:58045"/>
        <dbReference type="ChEBI" id="CHEBI:78442"/>
        <dbReference type="ChEBI" id="CHEBI:78528"/>
        <dbReference type="ChEBI" id="CHEBI:456215"/>
        <dbReference type="EC" id="6.1.1.5"/>
    </reaction>
</comment>
<comment type="cofactor">
    <cofactor evidence="1">
        <name>Zn(2+)</name>
        <dbReference type="ChEBI" id="CHEBI:29105"/>
    </cofactor>
    <text evidence="1">Binds 1 zinc ion per subunit.</text>
</comment>
<comment type="subunit">
    <text evidence="1">Monomer.</text>
</comment>
<comment type="subcellular location">
    <subcellularLocation>
        <location evidence="1">Cytoplasm</location>
    </subcellularLocation>
</comment>
<comment type="domain">
    <text evidence="1">IleRS has two distinct active sites: one for aminoacylation and one for editing. The misactivated valine is translocated from the active site to the editing site, which sterically excludes the correctly activated isoleucine. The single editing site contains two valyl binding pockets, one specific for each substrate (Val-AMP or Val-tRNA(Ile)).</text>
</comment>
<comment type="similarity">
    <text evidence="1">Belongs to the class-I aminoacyl-tRNA synthetase family. IleS type 1 subfamily.</text>
</comment>
<comment type="sequence caution" evidence="2">
    <conflict type="erroneous initiation">
        <sequence resource="EMBL-CDS" id="AAD30388"/>
    </conflict>
    <text>Truncated N-terminus.</text>
</comment>
<proteinExistence type="inferred from homology"/>
<feature type="chain" id="PRO_0000098387" description="Isoleucine--tRNA ligase">
    <location>
        <begin position="1"/>
        <end position="912"/>
    </location>
</feature>
<feature type="short sequence motif" description="'HIGH' region">
    <location>
        <begin position="57"/>
        <end position="67"/>
    </location>
</feature>
<feature type="short sequence motif" description="'KMSKS' region">
    <location>
        <begin position="590"/>
        <end position="594"/>
    </location>
</feature>
<feature type="binding site" evidence="1">
    <location>
        <position position="549"/>
    </location>
    <ligand>
        <name>L-isoleucyl-5'-AMP</name>
        <dbReference type="ChEBI" id="CHEBI:178002"/>
    </ligand>
</feature>
<feature type="binding site" evidence="1">
    <location>
        <position position="593"/>
    </location>
    <ligand>
        <name>ATP</name>
        <dbReference type="ChEBI" id="CHEBI:30616"/>
    </ligand>
</feature>
<feature type="binding site" evidence="1">
    <location>
        <position position="880"/>
    </location>
    <ligand>
        <name>Zn(2+)</name>
        <dbReference type="ChEBI" id="CHEBI:29105"/>
    </ligand>
</feature>
<feature type="binding site" evidence="1">
    <location>
        <position position="883"/>
    </location>
    <ligand>
        <name>Zn(2+)</name>
        <dbReference type="ChEBI" id="CHEBI:29105"/>
    </ligand>
</feature>
<feature type="binding site" evidence="1">
    <location>
        <position position="900"/>
    </location>
    <ligand>
        <name>Zn(2+)</name>
        <dbReference type="ChEBI" id="CHEBI:29105"/>
    </ligand>
</feature>
<feature type="binding site" evidence="1">
    <location>
        <position position="903"/>
    </location>
    <ligand>
        <name>Zn(2+)</name>
        <dbReference type="ChEBI" id="CHEBI:29105"/>
    </ligand>
</feature>
<feature type="sequence conflict" description="In Ref. 1; AAD30388." evidence="2" ref="1">
    <original>I</original>
    <variation>M</variation>
    <location>
        <position position="525"/>
    </location>
</feature>
<accession>Q9XDB4</accession>
<accession>H9UEA1</accession>
<dbReference type="EC" id="6.1.1.5" evidence="1"/>
<dbReference type="EMBL" id="AF096862">
    <property type="protein sequence ID" value="AAD30388.1"/>
    <property type="status" value="ALT_INIT"/>
    <property type="molecule type" value="Genomic_DNA"/>
</dbReference>
<dbReference type="EMBL" id="CP003260">
    <property type="protein sequence ID" value="AFG35844.1"/>
    <property type="molecule type" value="Genomic_DNA"/>
</dbReference>
<dbReference type="RefSeq" id="WP_014452273.1">
    <property type="nucleotide sequence ID" value="NC_017095.1"/>
</dbReference>
<dbReference type="SMR" id="Q9XDB4"/>
<dbReference type="STRING" id="771875.Ferpe_1791"/>
<dbReference type="KEGG" id="fpe:Ferpe_1791"/>
<dbReference type="PATRIC" id="fig|771875.3.peg.1818"/>
<dbReference type="eggNOG" id="COG0060">
    <property type="taxonomic scope" value="Bacteria"/>
</dbReference>
<dbReference type="HOGENOM" id="CLU_001493_7_0_0"/>
<dbReference type="OrthoDB" id="9810365at2"/>
<dbReference type="Proteomes" id="UP000007384">
    <property type="component" value="Chromosome"/>
</dbReference>
<dbReference type="GO" id="GO:0005829">
    <property type="term" value="C:cytosol"/>
    <property type="evidence" value="ECO:0007669"/>
    <property type="project" value="TreeGrafter"/>
</dbReference>
<dbReference type="GO" id="GO:0002161">
    <property type="term" value="F:aminoacyl-tRNA deacylase activity"/>
    <property type="evidence" value="ECO:0007669"/>
    <property type="project" value="InterPro"/>
</dbReference>
<dbReference type="GO" id="GO:0005524">
    <property type="term" value="F:ATP binding"/>
    <property type="evidence" value="ECO:0007669"/>
    <property type="project" value="UniProtKB-UniRule"/>
</dbReference>
<dbReference type="GO" id="GO:0004822">
    <property type="term" value="F:isoleucine-tRNA ligase activity"/>
    <property type="evidence" value="ECO:0007669"/>
    <property type="project" value="UniProtKB-UniRule"/>
</dbReference>
<dbReference type="GO" id="GO:0000049">
    <property type="term" value="F:tRNA binding"/>
    <property type="evidence" value="ECO:0007669"/>
    <property type="project" value="InterPro"/>
</dbReference>
<dbReference type="GO" id="GO:0008270">
    <property type="term" value="F:zinc ion binding"/>
    <property type="evidence" value="ECO:0007669"/>
    <property type="project" value="UniProtKB-UniRule"/>
</dbReference>
<dbReference type="GO" id="GO:0006428">
    <property type="term" value="P:isoleucyl-tRNA aminoacylation"/>
    <property type="evidence" value="ECO:0007669"/>
    <property type="project" value="UniProtKB-UniRule"/>
</dbReference>
<dbReference type="CDD" id="cd07960">
    <property type="entry name" value="Anticodon_Ia_Ile_BEm"/>
    <property type="match status" value="1"/>
</dbReference>
<dbReference type="CDD" id="cd00818">
    <property type="entry name" value="IleRS_core"/>
    <property type="match status" value="1"/>
</dbReference>
<dbReference type="FunFam" id="1.10.730.20:FF:000001">
    <property type="entry name" value="Isoleucine--tRNA ligase"/>
    <property type="match status" value="1"/>
</dbReference>
<dbReference type="FunFam" id="3.40.50.620:FF:000152">
    <property type="entry name" value="Isoleucine--tRNA ligase"/>
    <property type="match status" value="1"/>
</dbReference>
<dbReference type="Gene3D" id="1.10.730.20">
    <property type="match status" value="1"/>
</dbReference>
<dbReference type="Gene3D" id="3.40.50.620">
    <property type="entry name" value="HUPs"/>
    <property type="match status" value="2"/>
</dbReference>
<dbReference type="Gene3D" id="1.10.10.830">
    <property type="entry name" value="Ile-tRNA synthetase CP2 domain-like"/>
    <property type="match status" value="1"/>
</dbReference>
<dbReference type="HAMAP" id="MF_02002">
    <property type="entry name" value="Ile_tRNA_synth_type1"/>
    <property type="match status" value="1"/>
</dbReference>
<dbReference type="InterPro" id="IPR001412">
    <property type="entry name" value="aa-tRNA-synth_I_CS"/>
</dbReference>
<dbReference type="InterPro" id="IPR002300">
    <property type="entry name" value="aa-tRNA-synth_Ia"/>
</dbReference>
<dbReference type="InterPro" id="IPR033708">
    <property type="entry name" value="Anticodon_Ile_BEm"/>
</dbReference>
<dbReference type="InterPro" id="IPR002301">
    <property type="entry name" value="Ile-tRNA-ligase"/>
</dbReference>
<dbReference type="InterPro" id="IPR023585">
    <property type="entry name" value="Ile-tRNA-ligase_type1"/>
</dbReference>
<dbReference type="InterPro" id="IPR050081">
    <property type="entry name" value="Ile-tRNA_ligase"/>
</dbReference>
<dbReference type="InterPro" id="IPR013155">
    <property type="entry name" value="M/V/L/I-tRNA-synth_anticd-bd"/>
</dbReference>
<dbReference type="InterPro" id="IPR014729">
    <property type="entry name" value="Rossmann-like_a/b/a_fold"/>
</dbReference>
<dbReference type="InterPro" id="IPR009080">
    <property type="entry name" value="tRNAsynth_Ia_anticodon-bd"/>
</dbReference>
<dbReference type="InterPro" id="IPR009008">
    <property type="entry name" value="Val/Leu/Ile-tRNA-synth_edit"/>
</dbReference>
<dbReference type="InterPro" id="IPR010663">
    <property type="entry name" value="Znf_FPG/IleRS"/>
</dbReference>
<dbReference type="NCBIfam" id="TIGR00392">
    <property type="entry name" value="ileS"/>
    <property type="match status" value="1"/>
</dbReference>
<dbReference type="PANTHER" id="PTHR42765:SF1">
    <property type="entry name" value="ISOLEUCINE--TRNA LIGASE, MITOCHONDRIAL"/>
    <property type="match status" value="1"/>
</dbReference>
<dbReference type="PANTHER" id="PTHR42765">
    <property type="entry name" value="SOLEUCYL-TRNA SYNTHETASE"/>
    <property type="match status" value="1"/>
</dbReference>
<dbReference type="Pfam" id="PF08264">
    <property type="entry name" value="Anticodon_1"/>
    <property type="match status" value="1"/>
</dbReference>
<dbReference type="Pfam" id="PF00133">
    <property type="entry name" value="tRNA-synt_1"/>
    <property type="match status" value="1"/>
</dbReference>
<dbReference type="Pfam" id="PF06827">
    <property type="entry name" value="zf-FPG_IleRS"/>
    <property type="match status" value="1"/>
</dbReference>
<dbReference type="PRINTS" id="PR00984">
    <property type="entry name" value="TRNASYNTHILE"/>
</dbReference>
<dbReference type="SUPFAM" id="SSF47323">
    <property type="entry name" value="Anticodon-binding domain of a subclass of class I aminoacyl-tRNA synthetases"/>
    <property type="match status" value="1"/>
</dbReference>
<dbReference type="SUPFAM" id="SSF52374">
    <property type="entry name" value="Nucleotidylyl transferase"/>
    <property type="match status" value="1"/>
</dbReference>
<dbReference type="SUPFAM" id="SSF50677">
    <property type="entry name" value="ValRS/IleRS/LeuRS editing domain"/>
    <property type="match status" value="1"/>
</dbReference>
<dbReference type="PROSITE" id="PS00178">
    <property type="entry name" value="AA_TRNA_LIGASE_I"/>
    <property type="match status" value="1"/>
</dbReference>
<sequence>MDYKATLNLPQTNFQMKANLVNKEPEMLKFWEEKEIYKKTLETRANAPTYLLHDGPPYANGDIHLGTAMNKILKDFVTRYKTMRGYRVPFVPGWDTHGLPIEHRVTTSLGEEAKKKSPAEIRKLCKEFALKYVDIQREEFKRLGVKGDWEHPYITLDPDYEYHILDVFKTLVENGNVYRGNKPVYWCPTCRTALAEAEIEYHDHESPSIYVKFQMVDKPDTYIVIWTTTPWTIPANVAIALHPDYTYVKIKVDEEYWIVAEGLLQKFAADVGIDFEVVEKFVGKELEGKLTKHPLYDRTSVVVLADYVTLEDGTGCVHTAPGHGEEDYQTGLKYNLPVLSPVDDEGRFTKEAGKYEGLKIWDANKVIVEDLKNNGSLIKAGKISHSYPHCWRCKGPVMFRATPQWFISVDKNNLRGKVLEEIKKVKWYPAWGETRITAMVQERPDWTISRQRVWGVPIPAVKCKDCGEVTLEPKVIEHFANIVKEKGTDAWFELDVNELIPADFKCPACGSKNFEKTHDTLDVWIDSGCSWEAVIRSKGERFPVDLYLEGDDQHRGWFQSSIFLSTAKAGTAPFKAVVTHGFIKDEQGRKMSKSLGNVIDPMEIVNKYGADILRLWVASTDFFDNIRVGKNIIEQQVEVYRKLRNTLRYLLSNLYDFTEADLLPYEKLLPLDKWALGRLQKFIEQITQYYEGFEYSKVYNATVKYCTTELSAVYLDILKDRLYVEAKDSIYRRSAQTALHYILEALIKILAPIIPFTAEEAYQESHLKRYESVHLEYWPEVRKEFIDEALLEEFDHLLLIRDDVLKALENARASDIIGHSLDAHVIIEAKNEELKNLLRKYESLLEEFFIVSKVTLSENISGLNGQFANVLVQRAEGQKCQRCWKYHPDTGKDLEHPETCPRCSAVLRGERK</sequence>
<evidence type="ECO:0000255" key="1">
    <source>
        <dbReference type="HAMAP-Rule" id="MF_02002"/>
    </source>
</evidence>
<evidence type="ECO:0000305" key="2"/>
<gene>
    <name evidence="1" type="primary">ileS</name>
    <name type="ordered locus">Ferpe_1791</name>
</gene>
<keyword id="KW-0030">Aminoacyl-tRNA synthetase</keyword>
<keyword id="KW-0067">ATP-binding</keyword>
<keyword id="KW-0963">Cytoplasm</keyword>
<keyword id="KW-0436">Ligase</keyword>
<keyword id="KW-0479">Metal-binding</keyword>
<keyword id="KW-0547">Nucleotide-binding</keyword>
<keyword id="KW-0648">Protein biosynthesis</keyword>
<keyword id="KW-0862">Zinc</keyword>